<organism>
    <name type="scientific">Saccharomyces cerevisiae (strain ATCC 204508 / S288c)</name>
    <name type="common">Baker's yeast</name>
    <dbReference type="NCBI Taxonomy" id="559292"/>
    <lineage>
        <taxon>Eukaryota</taxon>
        <taxon>Fungi</taxon>
        <taxon>Dikarya</taxon>
        <taxon>Ascomycota</taxon>
        <taxon>Saccharomycotina</taxon>
        <taxon>Saccharomycetes</taxon>
        <taxon>Saccharomycetales</taxon>
        <taxon>Saccharomycetaceae</taxon>
        <taxon>Saccharomyces</taxon>
    </lineage>
</organism>
<sequence>MKPNNRTCDVITNKDESLPALLLPALNSYTCDDSLLKGQISSNGRYQPFGFSDCSLLPKRLNIQAGQGSMPVSSIQCADHSYSNWQKESEKTKLPKLGCPTEYTEYYKTVSSGETTDSAVVSSIATNRLKRKRQRDGPSCDSCRIKKIKCNATIIIFLQDRNLISSISSNLHYTLSQDDINQFRMKFFRKLPDVMGTYEVIKHLDKIVLFKACTSCSRRNQKNGKCLFSRGFTKSDMNVFPKINSKLKDKSIFEMTVDDYVAAGFQTL</sequence>
<dbReference type="EMBL" id="U31900">
    <property type="protein sequence ID" value="AAA97588.1"/>
    <property type="molecule type" value="Genomic_DNA"/>
</dbReference>
<dbReference type="EMBL" id="Z49919">
    <property type="protein sequence ID" value="CAA90153.1"/>
    <property type="molecule type" value="Genomic_DNA"/>
</dbReference>
<dbReference type="EMBL" id="Z71255">
    <property type="protein sequence ID" value="CAA95049.1"/>
    <property type="molecule type" value="Genomic_DNA"/>
</dbReference>
<dbReference type="EMBL" id="BK006949">
    <property type="protein sequence ID" value="DAA11436.1"/>
    <property type="molecule type" value="Genomic_DNA"/>
</dbReference>
<dbReference type="PIR" id="S57542">
    <property type="entry name" value="S57542"/>
</dbReference>
<dbReference type="RefSeq" id="NP_015334.1">
    <property type="nucleotide sequence ID" value="NM_001184106.1"/>
</dbReference>
<dbReference type="BioGRID" id="36187">
    <property type="interactions" value="101"/>
</dbReference>
<dbReference type="FunCoup" id="Q12286">
    <property type="interactions" value="244"/>
</dbReference>
<dbReference type="iPTMnet" id="Q12286"/>
<dbReference type="PaxDb" id="4932-YPR009W"/>
<dbReference type="PeptideAtlas" id="Q12286"/>
<dbReference type="EnsemblFungi" id="YPR009W_mRNA">
    <property type="protein sequence ID" value="YPR009W"/>
    <property type="gene ID" value="YPR009W"/>
</dbReference>
<dbReference type="GeneID" id="856118"/>
<dbReference type="KEGG" id="sce:YPR009W"/>
<dbReference type="AGR" id="SGD:S000006213"/>
<dbReference type="SGD" id="S000006213">
    <property type="gene designation" value="SUT2"/>
</dbReference>
<dbReference type="VEuPathDB" id="FungiDB:YPR009W"/>
<dbReference type="eggNOG" id="ENOG502S235">
    <property type="taxonomic scope" value="Eukaryota"/>
</dbReference>
<dbReference type="GeneTree" id="ENSGT00940000176592"/>
<dbReference type="HOGENOM" id="CLU_051216_0_0_1"/>
<dbReference type="InParanoid" id="Q12286"/>
<dbReference type="OMA" id="XKINSKL"/>
<dbReference type="OrthoDB" id="4036575at2759"/>
<dbReference type="BioCyc" id="YEAST:G3O-34171-MONOMER"/>
<dbReference type="BioGRID-ORCS" id="856118">
    <property type="hits" value="4 hits in 13 CRISPR screens"/>
</dbReference>
<dbReference type="PRO" id="PR:Q12286"/>
<dbReference type="Proteomes" id="UP000002311">
    <property type="component" value="Chromosome XVI"/>
</dbReference>
<dbReference type="RNAct" id="Q12286">
    <property type="molecule type" value="protein"/>
</dbReference>
<dbReference type="GO" id="GO:0005634">
    <property type="term" value="C:nucleus"/>
    <property type="evidence" value="ECO:0000314"/>
    <property type="project" value="SGD"/>
</dbReference>
<dbReference type="GO" id="GO:0000981">
    <property type="term" value="F:DNA-binding transcription factor activity, RNA polymerase II-specific"/>
    <property type="evidence" value="ECO:0007669"/>
    <property type="project" value="InterPro"/>
</dbReference>
<dbReference type="GO" id="GO:0043565">
    <property type="term" value="F:sequence-specific DNA binding"/>
    <property type="evidence" value="ECO:0007005"/>
    <property type="project" value="SGD"/>
</dbReference>
<dbReference type="GO" id="GO:0008270">
    <property type="term" value="F:zinc ion binding"/>
    <property type="evidence" value="ECO:0007669"/>
    <property type="project" value="InterPro"/>
</dbReference>
<dbReference type="GO" id="GO:0009267">
    <property type="term" value="P:cellular response to starvation"/>
    <property type="evidence" value="ECO:0000315"/>
    <property type="project" value="SGD"/>
</dbReference>
<dbReference type="GO" id="GO:1900429">
    <property type="term" value="P:negative regulation of filamentous growth of a population of unicellular organisms"/>
    <property type="evidence" value="ECO:0000315"/>
    <property type="project" value="SGD"/>
</dbReference>
<dbReference type="GO" id="GO:0000122">
    <property type="term" value="P:negative regulation of transcription by RNA polymerase II"/>
    <property type="evidence" value="ECO:0000315"/>
    <property type="project" value="SGD"/>
</dbReference>
<dbReference type="GO" id="GO:1900237">
    <property type="term" value="P:positive regulation of induction of conjugation with cellular fusion"/>
    <property type="evidence" value="ECO:0000315"/>
    <property type="project" value="SGD"/>
</dbReference>
<dbReference type="GO" id="GO:2000911">
    <property type="term" value="P:positive regulation of sterol import"/>
    <property type="evidence" value="ECO:0000315"/>
    <property type="project" value="SGD"/>
</dbReference>
<dbReference type="GO" id="GO:0045944">
    <property type="term" value="P:positive regulation of transcription by RNA polymerase II"/>
    <property type="evidence" value="ECO:0000315"/>
    <property type="project" value="SGD"/>
</dbReference>
<dbReference type="Gene3D" id="4.10.240.10">
    <property type="entry name" value="Zn(2)-C6 fungal-type DNA-binding domain"/>
    <property type="match status" value="1"/>
</dbReference>
<dbReference type="InterPro" id="IPR036864">
    <property type="entry name" value="Zn2-C6_fun-type_DNA-bd_sf"/>
</dbReference>
<keyword id="KW-0539">Nucleus</keyword>
<keyword id="KW-1185">Reference proteome</keyword>
<keyword id="KW-0804">Transcription</keyword>
<keyword id="KW-0805">Transcription regulation</keyword>
<name>SUT2_YEAST</name>
<proteinExistence type="inferred from homology"/>
<comment type="function">
    <text evidence="1 2 3">Putative transcription factor involved in the regulation of the activity of the cAMP/protein kinase A pathway (PubMed:15030478). Involved in sterol uptake (PubMed:11248676). With SUT1, positively regulates mating by repressing the expression of the mating inhibitors NCE102, PRR2 and RHO5 in response to pheromone (PubMed:23872066).</text>
</comment>
<comment type="subcellular location">
    <subcellularLocation>
        <location evidence="2">Nucleus</location>
    </subcellularLocation>
</comment>
<comment type="disruption phenotype">
    <text evidence="3">Leads to increased expression of NCE102 and PRR2, when SUT1 is also deleted.</text>
</comment>
<comment type="similarity">
    <text evidence="5">Belongs to the SUT1 family.</text>
</comment>
<evidence type="ECO:0000269" key="1">
    <source>
    </source>
</evidence>
<evidence type="ECO:0000269" key="2">
    <source>
    </source>
</evidence>
<evidence type="ECO:0000269" key="3">
    <source>
    </source>
</evidence>
<evidence type="ECO:0000303" key="4">
    <source>
    </source>
</evidence>
<evidence type="ECO:0000305" key="5"/>
<accession>Q12286</accession>
<accession>D6W420</accession>
<reference key="1">
    <citation type="journal article" date="1997" name="Nature">
        <title>The nucleotide sequence of Saccharomyces cerevisiae chromosome XVI.</title>
        <authorList>
            <person name="Bussey H."/>
            <person name="Storms R.K."/>
            <person name="Ahmed A."/>
            <person name="Albermann K."/>
            <person name="Allen E."/>
            <person name="Ansorge W."/>
            <person name="Araujo R."/>
            <person name="Aparicio A."/>
            <person name="Barrell B.G."/>
            <person name="Badcock K."/>
            <person name="Benes V."/>
            <person name="Botstein D."/>
            <person name="Bowman S."/>
            <person name="Brueckner M."/>
            <person name="Carpenter J."/>
            <person name="Cherry J.M."/>
            <person name="Chung E."/>
            <person name="Churcher C.M."/>
            <person name="Coster F."/>
            <person name="Davis K."/>
            <person name="Davis R.W."/>
            <person name="Dietrich F.S."/>
            <person name="Delius H."/>
            <person name="DiPaolo T."/>
            <person name="Dubois E."/>
            <person name="Duesterhoeft A."/>
            <person name="Duncan M."/>
            <person name="Floeth M."/>
            <person name="Fortin N."/>
            <person name="Friesen J.D."/>
            <person name="Fritz C."/>
            <person name="Goffeau A."/>
            <person name="Hall J."/>
            <person name="Hebling U."/>
            <person name="Heumann K."/>
            <person name="Hilbert H."/>
            <person name="Hillier L.W."/>
            <person name="Hunicke-Smith S."/>
            <person name="Hyman R.W."/>
            <person name="Johnston M."/>
            <person name="Kalman S."/>
            <person name="Kleine K."/>
            <person name="Komp C."/>
            <person name="Kurdi O."/>
            <person name="Lashkari D."/>
            <person name="Lew H."/>
            <person name="Lin A."/>
            <person name="Lin D."/>
            <person name="Louis E.J."/>
            <person name="Marathe R."/>
            <person name="Messenguy F."/>
            <person name="Mewes H.-W."/>
            <person name="Mirtipati S."/>
            <person name="Moestl D."/>
            <person name="Mueller-Auer S."/>
            <person name="Namath A."/>
            <person name="Nentwich U."/>
            <person name="Oefner P."/>
            <person name="Pearson D."/>
            <person name="Petel F.X."/>
            <person name="Pohl T.M."/>
            <person name="Purnelle B."/>
            <person name="Rajandream M.A."/>
            <person name="Rechmann S."/>
            <person name="Rieger M."/>
            <person name="Riles L."/>
            <person name="Roberts D."/>
            <person name="Schaefer M."/>
            <person name="Scharfe M."/>
            <person name="Scherens B."/>
            <person name="Schramm S."/>
            <person name="Schroeder M."/>
            <person name="Sdicu A.-M."/>
            <person name="Tettelin H."/>
            <person name="Urrestarazu L.A."/>
            <person name="Ushinsky S."/>
            <person name="Vierendeels F."/>
            <person name="Vissers S."/>
            <person name="Voss H."/>
            <person name="Walsh S.V."/>
            <person name="Wambutt R."/>
            <person name="Wang Y."/>
            <person name="Wedler E."/>
            <person name="Wedler H."/>
            <person name="Winnett E."/>
            <person name="Zhong W.-W."/>
            <person name="Zollner A."/>
            <person name="Vo D.H."/>
            <person name="Hani J."/>
        </authorList>
    </citation>
    <scope>NUCLEOTIDE SEQUENCE [LARGE SCALE GENOMIC DNA]</scope>
    <source>
        <strain>ATCC 204508 / S288c</strain>
    </source>
</reference>
<reference key="2">
    <citation type="journal article" date="2014" name="G3 (Bethesda)">
        <title>The reference genome sequence of Saccharomyces cerevisiae: Then and now.</title>
        <authorList>
            <person name="Engel S.R."/>
            <person name="Dietrich F.S."/>
            <person name="Fisk D.G."/>
            <person name="Binkley G."/>
            <person name="Balakrishnan R."/>
            <person name="Costanzo M.C."/>
            <person name="Dwight S.S."/>
            <person name="Hitz B.C."/>
            <person name="Karra K."/>
            <person name="Nash R.S."/>
            <person name="Weng S."/>
            <person name="Wong E.D."/>
            <person name="Lloyd P."/>
            <person name="Skrzypek M.S."/>
            <person name="Miyasato S.R."/>
            <person name="Simison M."/>
            <person name="Cherry J.M."/>
        </authorList>
    </citation>
    <scope>GENOME REANNOTATION</scope>
    <source>
        <strain>ATCC 204508 / S288c</strain>
    </source>
</reference>
<reference key="3">
    <citation type="journal article" date="2001" name="Eur. J. Biochem.">
        <title>SUT1 is a putative Zn[II]2Cys6-transcription factor whose upregulation enhances both sterol uptake and synthesis in aerobically growing Saccharomyces cerevisiae cells.</title>
        <authorList>
            <person name="Ness F."/>
            <person name="Bourot S."/>
            <person name="Regnacq M."/>
            <person name="Spagnoli R."/>
            <person name="Berges T."/>
            <person name="Karst F."/>
        </authorList>
    </citation>
    <scope>FUNCTION</scope>
</reference>
<reference key="4">
    <citation type="journal article" date="2004" name="Eur. J. Biochem.">
        <title>SUT2 is a novel multicopy suppressor of low activity of the cAMP/protein kinase A pathway in yeast.</title>
        <authorList>
            <person name="Ruetzler M."/>
            <person name="Reissaus A."/>
            <person name="Budzowska M."/>
            <person name="Bandlow W."/>
        </authorList>
    </citation>
    <scope>FUNCTION</scope>
    <scope>SUBCELLULAR LOCATION</scope>
</reference>
<reference key="5">
    <citation type="journal article" date="2013" name="Biochem. Biophys. Res. Commun.">
        <title>Regulation of mating in the budding yeast Saccharomyces cerevisiae by the zinc cluster proteins Sut1 and Sut2.</title>
        <authorList>
            <person name="Blanda C."/>
            <person name="Hoefken T."/>
        </authorList>
    </citation>
    <scope>FUNCTION</scope>
    <scope>DISRUPTION PHENOTYPE</scope>
</reference>
<gene>
    <name evidence="4" type="primary">SUT2</name>
    <name type="ordered locus">YPR009W</name>
    <name type="ORF">LPZ9w</name>
</gene>
<feature type="chain" id="PRO_0000115015" description="Sterol uptake protein 2">
    <location>
        <begin position="1"/>
        <end position="268"/>
    </location>
</feature>
<protein>
    <recommendedName>
        <fullName evidence="4">Sterol uptake protein 2</fullName>
    </recommendedName>
</protein>